<name>PCKG_CORGB</name>
<reference key="1">
    <citation type="journal article" date="2007" name="Microbiology">
        <title>Comparative analysis of the Corynebacterium glutamicum group and complete genome sequence of strain R.</title>
        <authorList>
            <person name="Yukawa H."/>
            <person name="Omumasaba C.A."/>
            <person name="Nonaka H."/>
            <person name="Kos P."/>
            <person name="Okai N."/>
            <person name="Suzuki N."/>
            <person name="Suda M."/>
            <person name="Tsuge Y."/>
            <person name="Watanabe J."/>
            <person name="Ikeda Y."/>
            <person name="Vertes A.A."/>
            <person name="Inui M."/>
        </authorList>
    </citation>
    <scope>NUCLEOTIDE SEQUENCE [LARGE SCALE GENOMIC DNA]</scope>
    <source>
        <strain>R</strain>
    </source>
</reference>
<keyword id="KW-0963">Cytoplasm</keyword>
<keyword id="KW-0210">Decarboxylase</keyword>
<keyword id="KW-0312">Gluconeogenesis</keyword>
<keyword id="KW-0342">GTP-binding</keyword>
<keyword id="KW-0456">Lyase</keyword>
<keyword id="KW-0464">Manganese</keyword>
<keyword id="KW-0479">Metal-binding</keyword>
<keyword id="KW-0547">Nucleotide-binding</keyword>
<accession>A4QHQ4</accession>
<evidence type="ECO:0000255" key="1">
    <source>
        <dbReference type="HAMAP-Rule" id="MF_00452"/>
    </source>
</evidence>
<comment type="function">
    <text evidence="1">Catalyzes the conversion of oxaloacetate (OAA) to phosphoenolpyruvate (PEP), the rate-limiting step in the metabolic pathway that produces glucose from lactate and other precursors derived from the citric acid cycle.</text>
</comment>
<comment type="catalytic activity">
    <reaction evidence="1">
        <text>oxaloacetate + GTP = phosphoenolpyruvate + GDP + CO2</text>
        <dbReference type="Rhea" id="RHEA:10388"/>
        <dbReference type="ChEBI" id="CHEBI:16452"/>
        <dbReference type="ChEBI" id="CHEBI:16526"/>
        <dbReference type="ChEBI" id="CHEBI:37565"/>
        <dbReference type="ChEBI" id="CHEBI:58189"/>
        <dbReference type="ChEBI" id="CHEBI:58702"/>
        <dbReference type="EC" id="4.1.1.32"/>
    </reaction>
</comment>
<comment type="cofactor">
    <cofactor evidence="1">
        <name>Mn(2+)</name>
        <dbReference type="ChEBI" id="CHEBI:29035"/>
    </cofactor>
    <text evidence="1">Binds 1 Mn(2+) ion per subunit.</text>
</comment>
<comment type="pathway">
    <text evidence="1">Carbohydrate biosynthesis; gluconeogenesis.</text>
</comment>
<comment type="subunit">
    <text evidence="1">Monomer.</text>
</comment>
<comment type="subcellular location">
    <subcellularLocation>
        <location evidence="1">Cytoplasm</location>
    </subcellularLocation>
</comment>
<comment type="similarity">
    <text evidence="1">Belongs to the phosphoenolpyruvate carboxykinase [GTP] family.</text>
</comment>
<organism>
    <name type="scientific">Corynebacterium glutamicum (strain R)</name>
    <dbReference type="NCBI Taxonomy" id="340322"/>
    <lineage>
        <taxon>Bacteria</taxon>
        <taxon>Bacillati</taxon>
        <taxon>Actinomycetota</taxon>
        <taxon>Actinomycetes</taxon>
        <taxon>Mycobacteriales</taxon>
        <taxon>Corynebacteriaceae</taxon>
        <taxon>Corynebacterium</taxon>
    </lineage>
</organism>
<protein>
    <recommendedName>
        <fullName evidence="1">Phosphoenolpyruvate carboxykinase [GTP]</fullName>
        <shortName evidence="1">PEP carboxykinase</shortName>
        <shortName evidence="1">PEPCK</shortName>
        <ecNumber evidence="1">4.1.1.32</ecNumber>
    </recommendedName>
</protein>
<proteinExistence type="inferred from homology"/>
<feature type="chain" id="PRO_1000060288" description="Phosphoenolpyruvate carboxykinase [GTP]">
    <location>
        <begin position="1"/>
        <end position="610"/>
    </location>
</feature>
<feature type="active site" evidence="1">
    <location>
        <position position="274"/>
    </location>
</feature>
<feature type="binding site" evidence="1">
    <location>
        <position position="82"/>
    </location>
    <ligand>
        <name>substrate</name>
    </ligand>
</feature>
<feature type="binding site" evidence="1">
    <location>
        <begin position="221"/>
        <end position="223"/>
    </location>
    <ligand>
        <name>substrate</name>
    </ligand>
</feature>
<feature type="binding site" evidence="1">
    <location>
        <position position="230"/>
    </location>
    <ligand>
        <name>Mn(2+)</name>
        <dbReference type="ChEBI" id="CHEBI:29035"/>
    </ligand>
</feature>
<feature type="binding site" evidence="1">
    <location>
        <position position="250"/>
    </location>
    <ligand>
        <name>Mn(2+)</name>
        <dbReference type="ChEBI" id="CHEBI:29035"/>
    </ligand>
</feature>
<feature type="binding site" evidence="1">
    <location>
        <position position="272"/>
    </location>
    <ligand>
        <name>substrate</name>
    </ligand>
</feature>
<feature type="binding site" evidence="1">
    <location>
        <begin position="273"/>
        <end position="278"/>
    </location>
    <ligand>
        <name>GTP</name>
        <dbReference type="ChEBI" id="CHEBI:37565"/>
    </ligand>
</feature>
<feature type="binding site" evidence="1">
    <location>
        <position position="297"/>
    </location>
    <ligand>
        <name>Mn(2+)</name>
        <dbReference type="ChEBI" id="CHEBI:29035"/>
    </ligand>
</feature>
<feature type="binding site" evidence="1">
    <location>
        <begin position="387"/>
        <end position="389"/>
    </location>
    <ligand>
        <name>substrate</name>
    </ligand>
</feature>
<feature type="binding site" evidence="1">
    <location>
        <position position="389"/>
    </location>
    <ligand>
        <name>GTP</name>
        <dbReference type="ChEBI" id="CHEBI:37565"/>
    </ligand>
</feature>
<feature type="binding site" evidence="1">
    <location>
        <position position="420"/>
    </location>
    <ligand>
        <name>GTP</name>
        <dbReference type="ChEBI" id="CHEBI:37565"/>
    </ligand>
</feature>
<feature type="binding site" evidence="1">
    <location>
        <begin position="515"/>
        <end position="518"/>
    </location>
    <ligand>
        <name>GTP</name>
        <dbReference type="ChEBI" id="CHEBI:37565"/>
    </ligand>
</feature>
<sequence>MTTAAIRGLQGEAPTKNKELLNWIADAVELFQPEAVVFVDGSQAEWDRMAEDLVEAGTLIKLNEEKRPNSYLARSNPSDVARVESRTFICSEKEEDAGPTNNWAPPQAMKDEMSKHYAGSMKGRTMYVVPFCMGPISDPDPKLGVQLTDSEYVVMSMRIMTRMGIEALDKIGANGSFVKCLHSVGAPLEPGQEDVAWPCNDTKYITQFPETKEIWSYGSGYGGNAILAKKCYALRIASVMAREEGWMAEHMLILKLINPEGKAYHIAAAFPSACGKTNLAMITPTIPGWTAQVVGDDIAWLKLREDGLYAVNPENGFFGVAPGTNYASNPIAMKTMEPGNTLFTNVALTDDGDIWWEGMDGDAPAHLIDWKGNDWTPESDENAAHPNSRYCVAIDQSPAAAPEFNDWEGVKIDAILFGGRRADTVPLVTQTYDWEHGTMVGALLASGQTAASAEAKVGTLRHDPMAMLPFIGYNAGEYLQNWIDMGNKGGDKMPSIFLVNWFRRGEDGRFLWPGFGDNSRVLKWVIDRIEGRVGADETVVGHTAKAEDLDLDGLDTPIEDVKEALTAPAEQWANDVQDNAEYLTFLGPRVPAEVHSQFDALKARISAAHA</sequence>
<gene>
    <name evidence="1" type="primary">pckG</name>
    <name type="ordered locus">cgR_2751</name>
</gene>
<dbReference type="EC" id="4.1.1.32" evidence="1"/>
<dbReference type="EMBL" id="AP009044">
    <property type="protein sequence ID" value="BAF55770.1"/>
    <property type="molecule type" value="Genomic_DNA"/>
</dbReference>
<dbReference type="RefSeq" id="WP_003857887.1">
    <property type="nucleotide sequence ID" value="NC_009342.1"/>
</dbReference>
<dbReference type="SMR" id="A4QHQ4"/>
<dbReference type="KEGG" id="cgt:cgR_2751"/>
<dbReference type="HOGENOM" id="CLU_028872_1_1_11"/>
<dbReference type="PhylomeDB" id="A4QHQ4"/>
<dbReference type="UniPathway" id="UPA00138"/>
<dbReference type="Proteomes" id="UP000006698">
    <property type="component" value="Chromosome"/>
</dbReference>
<dbReference type="GO" id="GO:0005829">
    <property type="term" value="C:cytosol"/>
    <property type="evidence" value="ECO:0007669"/>
    <property type="project" value="TreeGrafter"/>
</dbReference>
<dbReference type="GO" id="GO:0005525">
    <property type="term" value="F:GTP binding"/>
    <property type="evidence" value="ECO:0007669"/>
    <property type="project" value="UniProtKB-UniRule"/>
</dbReference>
<dbReference type="GO" id="GO:0030145">
    <property type="term" value="F:manganese ion binding"/>
    <property type="evidence" value="ECO:0007669"/>
    <property type="project" value="UniProtKB-UniRule"/>
</dbReference>
<dbReference type="GO" id="GO:0004613">
    <property type="term" value="F:phosphoenolpyruvate carboxykinase (GTP) activity"/>
    <property type="evidence" value="ECO:0007669"/>
    <property type="project" value="UniProtKB-UniRule"/>
</dbReference>
<dbReference type="GO" id="GO:0071333">
    <property type="term" value="P:cellular response to glucose stimulus"/>
    <property type="evidence" value="ECO:0007669"/>
    <property type="project" value="TreeGrafter"/>
</dbReference>
<dbReference type="GO" id="GO:0006094">
    <property type="term" value="P:gluconeogenesis"/>
    <property type="evidence" value="ECO:0007669"/>
    <property type="project" value="UniProtKB-UniRule"/>
</dbReference>
<dbReference type="GO" id="GO:0046327">
    <property type="term" value="P:glycerol biosynthetic process from pyruvate"/>
    <property type="evidence" value="ECO:0007669"/>
    <property type="project" value="TreeGrafter"/>
</dbReference>
<dbReference type="GO" id="GO:0006107">
    <property type="term" value="P:oxaloacetate metabolic process"/>
    <property type="evidence" value="ECO:0007669"/>
    <property type="project" value="TreeGrafter"/>
</dbReference>
<dbReference type="GO" id="GO:0019543">
    <property type="term" value="P:propionate catabolic process"/>
    <property type="evidence" value="ECO:0007669"/>
    <property type="project" value="TreeGrafter"/>
</dbReference>
<dbReference type="GO" id="GO:0033993">
    <property type="term" value="P:response to lipid"/>
    <property type="evidence" value="ECO:0007669"/>
    <property type="project" value="TreeGrafter"/>
</dbReference>
<dbReference type="GO" id="GO:0042594">
    <property type="term" value="P:response to starvation"/>
    <property type="evidence" value="ECO:0007669"/>
    <property type="project" value="TreeGrafter"/>
</dbReference>
<dbReference type="CDD" id="cd00819">
    <property type="entry name" value="PEPCK_GTP"/>
    <property type="match status" value="1"/>
</dbReference>
<dbReference type="FunFam" id="3.40.449.10:FF:000005">
    <property type="entry name" value="Phosphoenolpyruvate carboxykinase [GTP]"/>
    <property type="match status" value="1"/>
</dbReference>
<dbReference type="Gene3D" id="3.90.228.20">
    <property type="match status" value="1"/>
</dbReference>
<dbReference type="Gene3D" id="3.40.449.10">
    <property type="entry name" value="Phosphoenolpyruvate Carboxykinase, domain 1"/>
    <property type="match status" value="1"/>
</dbReference>
<dbReference type="Gene3D" id="2.170.8.10">
    <property type="entry name" value="Phosphoenolpyruvate Carboxykinase, domain 2"/>
    <property type="match status" value="1"/>
</dbReference>
<dbReference type="HAMAP" id="MF_00452">
    <property type="entry name" value="PEPCK_GTP"/>
    <property type="match status" value="1"/>
</dbReference>
<dbReference type="InterPro" id="IPR018091">
    <property type="entry name" value="PEP_carboxykin_GTP_CS"/>
</dbReference>
<dbReference type="InterPro" id="IPR013035">
    <property type="entry name" value="PEP_carboxykinase_C"/>
</dbReference>
<dbReference type="InterPro" id="IPR008209">
    <property type="entry name" value="PEP_carboxykinase_GTP"/>
</dbReference>
<dbReference type="InterPro" id="IPR035077">
    <property type="entry name" value="PEP_carboxykinase_GTP_C"/>
</dbReference>
<dbReference type="InterPro" id="IPR035078">
    <property type="entry name" value="PEP_carboxykinase_GTP_N"/>
</dbReference>
<dbReference type="InterPro" id="IPR008210">
    <property type="entry name" value="PEP_carboxykinase_N"/>
</dbReference>
<dbReference type="NCBIfam" id="NF003253">
    <property type="entry name" value="PRK04210.1"/>
    <property type="match status" value="1"/>
</dbReference>
<dbReference type="PANTHER" id="PTHR11561">
    <property type="entry name" value="PHOSPHOENOLPYRUVATE CARBOXYKINASE"/>
    <property type="match status" value="1"/>
</dbReference>
<dbReference type="PANTHER" id="PTHR11561:SF0">
    <property type="entry name" value="PHOSPHOENOLPYRUVATE CARBOXYKINASE [GTP]-RELATED"/>
    <property type="match status" value="1"/>
</dbReference>
<dbReference type="Pfam" id="PF00821">
    <property type="entry name" value="PEPCK_GTP"/>
    <property type="match status" value="1"/>
</dbReference>
<dbReference type="Pfam" id="PF17297">
    <property type="entry name" value="PEPCK_N"/>
    <property type="match status" value="1"/>
</dbReference>
<dbReference type="PIRSF" id="PIRSF001348">
    <property type="entry name" value="PEP_carboxykinase_GTP"/>
    <property type="match status" value="1"/>
</dbReference>
<dbReference type="SUPFAM" id="SSF68923">
    <property type="entry name" value="PEP carboxykinase N-terminal domain"/>
    <property type="match status" value="1"/>
</dbReference>
<dbReference type="SUPFAM" id="SSF53795">
    <property type="entry name" value="PEP carboxykinase-like"/>
    <property type="match status" value="1"/>
</dbReference>
<dbReference type="PROSITE" id="PS00505">
    <property type="entry name" value="PEPCK_GTP"/>
    <property type="match status" value="1"/>
</dbReference>